<gene>
    <name evidence="1" type="primary">pgk</name>
    <name type="ordered locus">VV1_1540</name>
</gene>
<reference key="1">
    <citation type="submission" date="2002-12" db="EMBL/GenBank/DDBJ databases">
        <title>Complete genome sequence of Vibrio vulnificus CMCP6.</title>
        <authorList>
            <person name="Rhee J.H."/>
            <person name="Kim S.Y."/>
            <person name="Chung S.S."/>
            <person name="Kim J.J."/>
            <person name="Moon Y.H."/>
            <person name="Jeong H."/>
            <person name="Choy H.E."/>
        </authorList>
    </citation>
    <scope>NUCLEOTIDE SEQUENCE [LARGE SCALE GENOMIC DNA]</scope>
    <source>
        <strain>CMCP6</strain>
    </source>
</reference>
<proteinExistence type="inferred from homology"/>
<accession>Q8DCA0</accession>
<feature type="chain" id="PRO_0000146037" description="Phosphoglycerate kinase">
    <location>
        <begin position="1"/>
        <end position="386"/>
    </location>
</feature>
<feature type="binding site" evidence="1">
    <location>
        <begin position="21"/>
        <end position="23"/>
    </location>
    <ligand>
        <name>substrate</name>
    </ligand>
</feature>
<feature type="binding site" evidence="1">
    <location>
        <position position="36"/>
    </location>
    <ligand>
        <name>substrate</name>
    </ligand>
</feature>
<feature type="binding site" evidence="1">
    <location>
        <begin position="59"/>
        <end position="62"/>
    </location>
    <ligand>
        <name>substrate</name>
    </ligand>
</feature>
<feature type="binding site" evidence="1">
    <location>
        <position position="113"/>
    </location>
    <ligand>
        <name>substrate</name>
    </ligand>
</feature>
<feature type="binding site" evidence="1">
    <location>
        <position position="146"/>
    </location>
    <ligand>
        <name>substrate</name>
    </ligand>
</feature>
<feature type="binding site" evidence="1">
    <location>
        <position position="197"/>
    </location>
    <ligand>
        <name>ATP</name>
        <dbReference type="ChEBI" id="CHEBI:30616"/>
    </ligand>
</feature>
<feature type="binding site" evidence="1">
    <location>
        <position position="314"/>
    </location>
    <ligand>
        <name>ATP</name>
        <dbReference type="ChEBI" id="CHEBI:30616"/>
    </ligand>
</feature>
<feature type="binding site" evidence="1">
    <location>
        <begin position="340"/>
        <end position="343"/>
    </location>
    <ligand>
        <name>ATP</name>
        <dbReference type="ChEBI" id="CHEBI:30616"/>
    </ligand>
</feature>
<protein>
    <recommendedName>
        <fullName evidence="1">Phosphoglycerate kinase</fullName>
        <ecNumber evidence="1">2.7.2.3</ecNumber>
    </recommendedName>
</protein>
<dbReference type="EC" id="2.7.2.3" evidence="1"/>
<dbReference type="EMBL" id="AE016795">
    <property type="protein sequence ID" value="AAO09965.1"/>
    <property type="molecule type" value="Genomic_DNA"/>
</dbReference>
<dbReference type="RefSeq" id="WP_011079476.1">
    <property type="nucleotide sequence ID" value="NC_004459.3"/>
</dbReference>
<dbReference type="SMR" id="Q8DCA0"/>
<dbReference type="KEGG" id="vvu:VV1_1540"/>
<dbReference type="HOGENOM" id="CLU_025427_0_2_6"/>
<dbReference type="UniPathway" id="UPA00109">
    <property type="reaction ID" value="UER00185"/>
</dbReference>
<dbReference type="Proteomes" id="UP000002275">
    <property type="component" value="Chromosome 1"/>
</dbReference>
<dbReference type="GO" id="GO:0005829">
    <property type="term" value="C:cytosol"/>
    <property type="evidence" value="ECO:0007669"/>
    <property type="project" value="TreeGrafter"/>
</dbReference>
<dbReference type="GO" id="GO:0043531">
    <property type="term" value="F:ADP binding"/>
    <property type="evidence" value="ECO:0007669"/>
    <property type="project" value="TreeGrafter"/>
</dbReference>
<dbReference type="GO" id="GO:0005524">
    <property type="term" value="F:ATP binding"/>
    <property type="evidence" value="ECO:0007669"/>
    <property type="project" value="UniProtKB-KW"/>
</dbReference>
<dbReference type="GO" id="GO:0004618">
    <property type="term" value="F:phosphoglycerate kinase activity"/>
    <property type="evidence" value="ECO:0007669"/>
    <property type="project" value="UniProtKB-UniRule"/>
</dbReference>
<dbReference type="GO" id="GO:0006094">
    <property type="term" value="P:gluconeogenesis"/>
    <property type="evidence" value="ECO:0007669"/>
    <property type="project" value="TreeGrafter"/>
</dbReference>
<dbReference type="GO" id="GO:0006096">
    <property type="term" value="P:glycolytic process"/>
    <property type="evidence" value="ECO:0007669"/>
    <property type="project" value="UniProtKB-UniRule"/>
</dbReference>
<dbReference type="FunFam" id="3.40.50.1260:FF:000001">
    <property type="entry name" value="Phosphoglycerate kinase"/>
    <property type="match status" value="1"/>
</dbReference>
<dbReference type="FunFam" id="3.40.50.1260:FF:000002">
    <property type="entry name" value="Phosphoglycerate kinase"/>
    <property type="match status" value="1"/>
</dbReference>
<dbReference type="Gene3D" id="3.40.50.1260">
    <property type="entry name" value="Phosphoglycerate kinase, N-terminal domain"/>
    <property type="match status" value="2"/>
</dbReference>
<dbReference type="HAMAP" id="MF_00145">
    <property type="entry name" value="Phosphoglyc_kinase"/>
    <property type="match status" value="1"/>
</dbReference>
<dbReference type="InterPro" id="IPR001576">
    <property type="entry name" value="Phosphoglycerate_kinase"/>
</dbReference>
<dbReference type="InterPro" id="IPR015911">
    <property type="entry name" value="Phosphoglycerate_kinase_CS"/>
</dbReference>
<dbReference type="InterPro" id="IPR015824">
    <property type="entry name" value="Phosphoglycerate_kinase_N"/>
</dbReference>
<dbReference type="InterPro" id="IPR036043">
    <property type="entry name" value="Phosphoglycerate_kinase_sf"/>
</dbReference>
<dbReference type="PANTHER" id="PTHR11406">
    <property type="entry name" value="PHOSPHOGLYCERATE KINASE"/>
    <property type="match status" value="1"/>
</dbReference>
<dbReference type="PANTHER" id="PTHR11406:SF23">
    <property type="entry name" value="PHOSPHOGLYCERATE KINASE 1, CHLOROPLASTIC-RELATED"/>
    <property type="match status" value="1"/>
</dbReference>
<dbReference type="Pfam" id="PF00162">
    <property type="entry name" value="PGK"/>
    <property type="match status" value="1"/>
</dbReference>
<dbReference type="PIRSF" id="PIRSF000724">
    <property type="entry name" value="Pgk"/>
    <property type="match status" value="1"/>
</dbReference>
<dbReference type="PRINTS" id="PR00477">
    <property type="entry name" value="PHGLYCKINASE"/>
</dbReference>
<dbReference type="SUPFAM" id="SSF53748">
    <property type="entry name" value="Phosphoglycerate kinase"/>
    <property type="match status" value="1"/>
</dbReference>
<dbReference type="PROSITE" id="PS00111">
    <property type="entry name" value="PGLYCERATE_KINASE"/>
    <property type="match status" value="1"/>
</dbReference>
<organism>
    <name type="scientific">Vibrio vulnificus (strain CMCP6)</name>
    <dbReference type="NCBI Taxonomy" id="216895"/>
    <lineage>
        <taxon>Bacteria</taxon>
        <taxon>Pseudomonadati</taxon>
        <taxon>Pseudomonadota</taxon>
        <taxon>Gammaproteobacteria</taxon>
        <taxon>Vibrionales</taxon>
        <taxon>Vibrionaceae</taxon>
        <taxon>Vibrio</taxon>
    </lineage>
</organism>
<comment type="catalytic activity">
    <reaction evidence="1">
        <text>(2R)-3-phosphoglycerate + ATP = (2R)-3-phospho-glyceroyl phosphate + ADP</text>
        <dbReference type="Rhea" id="RHEA:14801"/>
        <dbReference type="ChEBI" id="CHEBI:30616"/>
        <dbReference type="ChEBI" id="CHEBI:57604"/>
        <dbReference type="ChEBI" id="CHEBI:58272"/>
        <dbReference type="ChEBI" id="CHEBI:456216"/>
        <dbReference type="EC" id="2.7.2.3"/>
    </reaction>
</comment>
<comment type="pathway">
    <text evidence="1">Carbohydrate degradation; glycolysis; pyruvate from D-glyceraldehyde 3-phosphate: step 2/5.</text>
</comment>
<comment type="subunit">
    <text evidence="1">Monomer.</text>
</comment>
<comment type="subcellular location">
    <subcellularLocation>
        <location evidence="1">Cytoplasm</location>
    </subcellularLocation>
</comment>
<comment type="similarity">
    <text evidence="1">Belongs to the phosphoglycerate kinase family.</text>
</comment>
<evidence type="ECO:0000255" key="1">
    <source>
        <dbReference type="HAMAP-Rule" id="MF_00145"/>
    </source>
</evidence>
<name>PGK_VIBVU</name>
<sequence>MSVIKMTDLDLAGKRVFIRADLNVPVKDGKVTSDARIIASLPTIKLCLEAGAKVMVTSHLGRPTEGEYAEEFSLQPVVNYLNDALDCEVKLAKDYLDGLELNAGELVVLENVRFNKGEKKNDEELSKKYAALCDVFVMDAFGTAHRAQASTHGVGMFAEVACAGPLLAAELEALGKAMSNPERPLVAIVGGSKVSTKLTVLESLSKIADQLVVGGGIANTFIAAEGHNVGKSLYEADLVETAQKLMKECAIPVATDVACAKAFDENAEAEIKHVSEVQDDDMIFDLGPDSTAALAEIIANAKTILWNGPVGVFEFKNFEAGTKGISEAIAQSPAFSVAGGGDTLAAIDKFGIKADVSYISTGGGAFLEFVEGKVLPAVEMLEARAK</sequence>
<keyword id="KW-0067">ATP-binding</keyword>
<keyword id="KW-0963">Cytoplasm</keyword>
<keyword id="KW-0324">Glycolysis</keyword>
<keyword id="KW-0418">Kinase</keyword>
<keyword id="KW-0547">Nucleotide-binding</keyword>
<keyword id="KW-0808">Transferase</keyword>